<feature type="chain" id="PRO_1000185645" description="Ribosomal RNA small subunit methyltransferase F">
    <location>
        <begin position="1"/>
        <end position="478"/>
    </location>
</feature>
<feature type="active site" description="Nucleophile" evidence="1">
    <location>
        <position position="243"/>
    </location>
</feature>
<feature type="binding site" evidence="1">
    <location>
        <begin position="121"/>
        <end position="127"/>
    </location>
    <ligand>
        <name>S-adenosyl-L-methionine</name>
        <dbReference type="ChEBI" id="CHEBI:59789"/>
    </ligand>
</feature>
<feature type="binding site" evidence="1">
    <location>
        <position position="145"/>
    </location>
    <ligand>
        <name>S-adenosyl-L-methionine</name>
        <dbReference type="ChEBI" id="CHEBI:59789"/>
    </ligand>
</feature>
<feature type="binding site" evidence="1">
    <location>
        <position position="172"/>
    </location>
    <ligand>
        <name>S-adenosyl-L-methionine</name>
        <dbReference type="ChEBI" id="CHEBI:59789"/>
    </ligand>
</feature>
<feature type="binding site" evidence="1">
    <location>
        <position position="190"/>
    </location>
    <ligand>
        <name>S-adenosyl-L-methionine</name>
        <dbReference type="ChEBI" id="CHEBI:59789"/>
    </ligand>
</feature>
<sequence>MVQLNQDFIKSIAKDMPAHLSMDDFISYSSKPLRPSIRINTLKISSQDFIALMAPKGWTLEPIPWCQDGFWISLDSDVQLGNTVEHLQGLFYIQEASSMLPPIALFSTKTDKAEHTILDMASAPGSKTTQIAAMMDNSGLLIANEYSSSRVKVLHANVLRMGVSNTALTHFDARVFGEYLYDQFDAILLDAPCSGEGTIRKDPLALNNWGLAENSAIAETQKALLESAFLALKTGGSLVYSTCALSKLENQDVCEHLRSTFPEAVEFESLATLFPDADKACTDEGFLHVWPQIYDSEGFFIAKITKTCDVERQKPEPKRQKNFPFTPISSKVELELRQYFKQTFDIDIPTDDMLMVRDLEYWLFPAGMKTLIGKMRFQRIGVKLADGLKKGFKARHEAIVALAEKSTGYELSQAQAIQYLMGRDIPLVDGGKPQGELIVTYHGSALGVAKHLGSRLKNTLPRDLVRDKIADSDASTTA</sequence>
<organism>
    <name type="scientific">Shewanella sediminis (strain HAW-EB3)</name>
    <dbReference type="NCBI Taxonomy" id="425104"/>
    <lineage>
        <taxon>Bacteria</taxon>
        <taxon>Pseudomonadati</taxon>
        <taxon>Pseudomonadota</taxon>
        <taxon>Gammaproteobacteria</taxon>
        <taxon>Alteromonadales</taxon>
        <taxon>Shewanellaceae</taxon>
        <taxon>Shewanella</taxon>
    </lineage>
</organism>
<gene>
    <name evidence="1" type="primary">rsmF</name>
    <name type="ordered locus">Ssed_2644</name>
</gene>
<dbReference type="EC" id="2.1.1.178" evidence="1"/>
<dbReference type="EMBL" id="CP000821">
    <property type="protein sequence ID" value="ABV37251.1"/>
    <property type="molecule type" value="Genomic_DNA"/>
</dbReference>
<dbReference type="RefSeq" id="WP_012142982.1">
    <property type="nucleotide sequence ID" value="NC_009831.1"/>
</dbReference>
<dbReference type="SMR" id="A8FWM8"/>
<dbReference type="STRING" id="425104.Ssed_2644"/>
<dbReference type="KEGG" id="sse:Ssed_2644"/>
<dbReference type="eggNOG" id="COG0144">
    <property type="taxonomic scope" value="Bacteria"/>
</dbReference>
<dbReference type="eggNOG" id="COG3270">
    <property type="taxonomic scope" value="Bacteria"/>
</dbReference>
<dbReference type="HOGENOM" id="CLU_005316_6_2_6"/>
<dbReference type="OrthoDB" id="9810297at2"/>
<dbReference type="Proteomes" id="UP000002015">
    <property type="component" value="Chromosome"/>
</dbReference>
<dbReference type="GO" id="GO:0005737">
    <property type="term" value="C:cytoplasm"/>
    <property type="evidence" value="ECO:0007669"/>
    <property type="project" value="UniProtKB-SubCell"/>
</dbReference>
<dbReference type="GO" id="GO:0003723">
    <property type="term" value="F:RNA binding"/>
    <property type="evidence" value="ECO:0007669"/>
    <property type="project" value="UniProtKB-KW"/>
</dbReference>
<dbReference type="GO" id="GO:0009383">
    <property type="term" value="F:rRNA (cytosine-C5-)-methyltransferase activity"/>
    <property type="evidence" value="ECO:0007669"/>
    <property type="project" value="TreeGrafter"/>
</dbReference>
<dbReference type="GO" id="GO:0070475">
    <property type="term" value="P:rRNA base methylation"/>
    <property type="evidence" value="ECO:0007669"/>
    <property type="project" value="TreeGrafter"/>
</dbReference>
<dbReference type="CDD" id="cd02440">
    <property type="entry name" value="AdoMet_MTases"/>
    <property type="match status" value="1"/>
</dbReference>
<dbReference type="Gene3D" id="3.10.450.720">
    <property type="match status" value="1"/>
</dbReference>
<dbReference type="Gene3D" id="3.40.50.150">
    <property type="entry name" value="Vaccinia Virus protein VP39"/>
    <property type="match status" value="1"/>
</dbReference>
<dbReference type="HAMAP" id="MF_01579">
    <property type="entry name" value="16SrRNA_methyltr_F"/>
    <property type="match status" value="1"/>
</dbReference>
<dbReference type="InterPro" id="IPR031341">
    <property type="entry name" value="Methyltr_RsmF_N"/>
</dbReference>
<dbReference type="InterPro" id="IPR049560">
    <property type="entry name" value="MeTrfase_RsmB-F_NOP2_cat"/>
</dbReference>
<dbReference type="InterPro" id="IPR001678">
    <property type="entry name" value="MeTrfase_RsmB-F_NOP2_dom"/>
</dbReference>
<dbReference type="InterPro" id="IPR027391">
    <property type="entry name" value="Nol1_Nop2_Fmu_2"/>
</dbReference>
<dbReference type="InterPro" id="IPR011023">
    <property type="entry name" value="Nop2p"/>
</dbReference>
<dbReference type="InterPro" id="IPR023267">
    <property type="entry name" value="RCMT"/>
</dbReference>
<dbReference type="InterPro" id="IPR023545">
    <property type="entry name" value="rRNA_ssu_MeTfrase_F"/>
</dbReference>
<dbReference type="InterPro" id="IPR018314">
    <property type="entry name" value="RsmB/NOL1/NOP2-like_CS"/>
</dbReference>
<dbReference type="InterPro" id="IPR029063">
    <property type="entry name" value="SAM-dependent_MTases_sf"/>
</dbReference>
<dbReference type="InterPro" id="IPR048457">
    <property type="entry name" value="YebU_pre-PUA_dom"/>
</dbReference>
<dbReference type="NCBIfam" id="TIGR00446">
    <property type="entry name" value="nop2p"/>
    <property type="match status" value="1"/>
</dbReference>
<dbReference type="NCBIfam" id="NF008898">
    <property type="entry name" value="PRK11933.1"/>
    <property type="match status" value="1"/>
</dbReference>
<dbReference type="PANTHER" id="PTHR22807:SF30">
    <property type="entry name" value="28S RRNA (CYTOSINE(4447)-C(5))-METHYLTRANSFERASE-RELATED"/>
    <property type="match status" value="1"/>
</dbReference>
<dbReference type="PANTHER" id="PTHR22807">
    <property type="entry name" value="NOP2 YEAST -RELATED NOL1/NOP2/FMU SUN DOMAIN-CONTAINING"/>
    <property type="match status" value="1"/>
</dbReference>
<dbReference type="Pfam" id="PF01189">
    <property type="entry name" value="Methyltr_RsmB-F"/>
    <property type="match status" value="1"/>
</dbReference>
<dbReference type="Pfam" id="PF17125">
    <property type="entry name" value="Methyltr_RsmF_N"/>
    <property type="match status" value="1"/>
</dbReference>
<dbReference type="Pfam" id="PF13636">
    <property type="entry name" value="Methyltranf_PUA"/>
    <property type="match status" value="1"/>
</dbReference>
<dbReference type="Pfam" id="PF21150">
    <property type="entry name" value="YebU_pre-PUA_dom"/>
    <property type="match status" value="1"/>
</dbReference>
<dbReference type="PRINTS" id="PR02008">
    <property type="entry name" value="RCMTFAMILY"/>
</dbReference>
<dbReference type="SUPFAM" id="SSF53335">
    <property type="entry name" value="S-adenosyl-L-methionine-dependent methyltransferases"/>
    <property type="match status" value="1"/>
</dbReference>
<dbReference type="PROSITE" id="PS01153">
    <property type="entry name" value="NOL1_NOP2_SUN"/>
    <property type="match status" value="1"/>
</dbReference>
<dbReference type="PROSITE" id="PS51686">
    <property type="entry name" value="SAM_MT_RSMB_NOP"/>
    <property type="match status" value="1"/>
</dbReference>
<protein>
    <recommendedName>
        <fullName evidence="1">Ribosomal RNA small subunit methyltransferase F</fullName>
        <ecNumber evidence="1">2.1.1.178</ecNumber>
    </recommendedName>
    <alternativeName>
        <fullName evidence="1">16S rRNA m5C1407 methyltransferase</fullName>
    </alternativeName>
    <alternativeName>
        <fullName evidence="1">rRNA (cytosine-C(5)-)-methyltransferase RsmF</fullName>
    </alternativeName>
</protein>
<comment type="function">
    <text evidence="1">Specifically methylates the cytosine at position 1407 (m5C1407) of 16S rRNA.</text>
</comment>
<comment type="catalytic activity">
    <reaction evidence="1">
        <text>cytidine(1407) in 16S rRNA + S-adenosyl-L-methionine = 5-methylcytidine(1407) in 16S rRNA + S-adenosyl-L-homocysteine + H(+)</text>
        <dbReference type="Rhea" id="RHEA:42756"/>
        <dbReference type="Rhea" id="RHEA-COMP:10223"/>
        <dbReference type="Rhea" id="RHEA-COMP:10224"/>
        <dbReference type="ChEBI" id="CHEBI:15378"/>
        <dbReference type="ChEBI" id="CHEBI:57856"/>
        <dbReference type="ChEBI" id="CHEBI:59789"/>
        <dbReference type="ChEBI" id="CHEBI:74483"/>
        <dbReference type="ChEBI" id="CHEBI:82748"/>
        <dbReference type="EC" id="2.1.1.178"/>
    </reaction>
</comment>
<comment type="subcellular location">
    <subcellularLocation>
        <location evidence="1">Cytoplasm</location>
    </subcellularLocation>
</comment>
<comment type="similarity">
    <text evidence="1">Belongs to the class I-like SAM-binding methyltransferase superfamily. RsmB/NOP family.</text>
</comment>
<proteinExistence type="inferred from homology"/>
<evidence type="ECO:0000255" key="1">
    <source>
        <dbReference type="HAMAP-Rule" id="MF_01579"/>
    </source>
</evidence>
<name>RSMF_SHESH</name>
<keyword id="KW-0963">Cytoplasm</keyword>
<keyword id="KW-0489">Methyltransferase</keyword>
<keyword id="KW-1185">Reference proteome</keyword>
<keyword id="KW-0694">RNA-binding</keyword>
<keyword id="KW-0698">rRNA processing</keyword>
<keyword id="KW-0949">S-adenosyl-L-methionine</keyword>
<keyword id="KW-0808">Transferase</keyword>
<accession>A8FWM8</accession>
<reference key="1">
    <citation type="submission" date="2007-08" db="EMBL/GenBank/DDBJ databases">
        <title>Complete sequence of Shewanella sediminis HAW-EB3.</title>
        <authorList>
            <consortium name="US DOE Joint Genome Institute"/>
            <person name="Copeland A."/>
            <person name="Lucas S."/>
            <person name="Lapidus A."/>
            <person name="Barry K."/>
            <person name="Glavina del Rio T."/>
            <person name="Dalin E."/>
            <person name="Tice H."/>
            <person name="Pitluck S."/>
            <person name="Chertkov O."/>
            <person name="Brettin T."/>
            <person name="Bruce D."/>
            <person name="Detter J.C."/>
            <person name="Han C."/>
            <person name="Schmutz J."/>
            <person name="Larimer F."/>
            <person name="Land M."/>
            <person name="Hauser L."/>
            <person name="Kyrpides N."/>
            <person name="Kim E."/>
            <person name="Zhao J.-S."/>
            <person name="Richardson P."/>
        </authorList>
    </citation>
    <scope>NUCLEOTIDE SEQUENCE [LARGE SCALE GENOMIC DNA]</scope>
    <source>
        <strain>HAW-EB3</strain>
    </source>
</reference>